<sequence>MVVLAAAICTKNGKALLSRQFSEMTKSRVEGLLAAFPKLIGLGRQHTFIETENIRYVYQPLESLYIVLITNKNSNILEDLETLHLLAKLVPEYSNFDEYDISKNAFELIFTFDEVIAMGYKERVTLQQIKHFISMESHEEERFRMEEKIKQKEAQILASSKAKEIERMRHEEMLRGKRSGGYTGISGGGGMGSGGMGSNQYRDNDRDNYHSNNNNNNNNNNNNNNNNNNNRDRDRGDSPNTSRPSAASSGSQGGMILGGKSGTNKNSAIAQVLKEEKIVEKVEDVEQLLDSQISQIPETPTVPQEGVHITVEESFTSFVESDGTVESIDIKGGLSVQINDQSLGKVKVNLKQGKLSKQFQFITHPNIDKALFGEQSVLRLRDGGKGFPSGGILKWRCKTNQESMMPIRVNCWPSPGRDSTTVNLEYDSLVGYELKSVFIVIPNPTSNAPIINQFDGLYEYDNKQKCVIWKIPLIDDSNRQGSMEFSVKGNTQSFFPVKIQFTASQTICDTTVGSVFVEDSNQSTNFSTETTLSVDTYEIK</sequence>
<keyword id="KW-0963">Cytoplasm</keyword>
<keyword id="KW-0968">Cytoplasmic vesicle</keyword>
<keyword id="KW-0931">ER-Golgi transport</keyword>
<keyword id="KW-0333">Golgi apparatus</keyword>
<keyword id="KW-0472">Membrane</keyword>
<keyword id="KW-0653">Protein transport</keyword>
<keyword id="KW-1185">Reference proteome</keyword>
<keyword id="KW-0813">Transport</keyword>
<gene>
    <name type="primary">copd</name>
    <name type="ORF">DDB_G0268702</name>
</gene>
<feature type="chain" id="PRO_0000330861" description="Coatomer subunit delta">
    <location>
        <begin position="1"/>
        <end position="540"/>
    </location>
</feature>
<feature type="domain" description="MHD" evidence="2">
    <location>
        <begin position="304"/>
        <end position="540"/>
    </location>
</feature>
<feature type="region of interest" description="Disordered" evidence="3">
    <location>
        <begin position="169"/>
        <end position="263"/>
    </location>
</feature>
<feature type="compositionally biased region" description="Gly residues" evidence="3">
    <location>
        <begin position="179"/>
        <end position="197"/>
    </location>
</feature>
<feature type="compositionally biased region" description="Low complexity" evidence="3">
    <location>
        <begin position="212"/>
        <end position="229"/>
    </location>
</feature>
<feature type="compositionally biased region" description="Polar residues" evidence="3">
    <location>
        <begin position="238"/>
        <end position="250"/>
    </location>
</feature>
<feature type="compositionally biased region" description="Gly residues" evidence="3">
    <location>
        <begin position="251"/>
        <end position="261"/>
    </location>
</feature>
<name>COPD_DICDI</name>
<comment type="function">
    <text evidence="1">The coatomer is a cytosolic protein complex that binds to dilysine motifs and reversibly associates with Golgi non-clathrin-coated vesicles, which further mediate biosynthetic protein transport from the ER, via the Golgi up to the trans Golgi network. Coatomer complex is required for budding from Golgi membranes, and is essential for the retrograde Golgi-to-ER transport of dilysine-tagged proteins (By similarity).</text>
</comment>
<comment type="subunit">
    <text evidence="1">Oligomeric complex that consists of at least the alpha, beta, beta', gamma, delta, epsilon and zeta subunits.</text>
</comment>
<comment type="subcellular location">
    <subcellularLocation>
        <location evidence="1">Cytoplasm</location>
    </subcellularLocation>
    <subcellularLocation>
        <location evidence="1">Golgi apparatus membrane</location>
        <topology evidence="1">Peripheral membrane protein</topology>
        <orientation evidence="1">Cytoplasmic side</orientation>
    </subcellularLocation>
    <subcellularLocation>
        <location evidence="1">Cytoplasmic vesicle</location>
        <location evidence="1">COPI-coated vesicle membrane</location>
        <topology evidence="1">Peripheral membrane protein</topology>
        <orientation evidence="1">Cytoplasmic side</orientation>
    </subcellularLocation>
    <text evidence="1">The coatomer is cytoplasmic or polymerized on the cytoplasmic side of the Golgi, as well as on the vesicles/buds originating from it.</text>
</comment>
<comment type="similarity">
    <text evidence="4">Belongs to the adaptor complexes medium subunit family. Delta-COP subfamily.</text>
</comment>
<protein>
    <recommendedName>
        <fullName>Coatomer subunit delta</fullName>
    </recommendedName>
    <alternativeName>
        <fullName>Delta-coat protein</fullName>
        <shortName>Delta-COP</shortName>
    </alternativeName>
</protein>
<organism>
    <name type="scientific">Dictyostelium discoideum</name>
    <name type="common">Social amoeba</name>
    <dbReference type="NCBI Taxonomy" id="44689"/>
    <lineage>
        <taxon>Eukaryota</taxon>
        <taxon>Amoebozoa</taxon>
        <taxon>Evosea</taxon>
        <taxon>Eumycetozoa</taxon>
        <taxon>Dictyostelia</taxon>
        <taxon>Dictyosteliales</taxon>
        <taxon>Dictyosteliaceae</taxon>
        <taxon>Dictyostelium</taxon>
    </lineage>
</organism>
<reference key="1">
    <citation type="journal article" date="2005" name="Nature">
        <title>The genome of the social amoeba Dictyostelium discoideum.</title>
        <authorList>
            <person name="Eichinger L."/>
            <person name="Pachebat J.A."/>
            <person name="Gloeckner G."/>
            <person name="Rajandream M.A."/>
            <person name="Sucgang R."/>
            <person name="Berriman M."/>
            <person name="Song J."/>
            <person name="Olsen R."/>
            <person name="Szafranski K."/>
            <person name="Xu Q."/>
            <person name="Tunggal B."/>
            <person name="Kummerfeld S."/>
            <person name="Madera M."/>
            <person name="Konfortov B.A."/>
            <person name="Rivero F."/>
            <person name="Bankier A.T."/>
            <person name="Lehmann R."/>
            <person name="Hamlin N."/>
            <person name="Davies R."/>
            <person name="Gaudet P."/>
            <person name="Fey P."/>
            <person name="Pilcher K."/>
            <person name="Chen G."/>
            <person name="Saunders D."/>
            <person name="Sodergren E.J."/>
            <person name="Davis P."/>
            <person name="Kerhornou A."/>
            <person name="Nie X."/>
            <person name="Hall N."/>
            <person name="Anjard C."/>
            <person name="Hemphill L."/>
            <person name="Bason N."/>
            <person name="Farbrother P."/>
            <person name="Desany B."/>
            <person name="Just E."/>
            <person name="Morio T."/>
            <person name="Rost R."/>
            <person name="Churcher C.M."/>
            <person name="Cooper J."/>
            <person name="Haydock S."/>
            <person name="van Driessche N."/>
            <person name="Cronin A."/>
            <person name="Goodhead I."/>
            <person name="Muzny D.M."/>
            <person name="Mourier T."/>
            <person name="Pain A."/>
            <person name="Lu M."/>
            <person name="Harper D."/>
            <person name="Lindsay R."/>
            <person name="Hauser H."/>
            <person name="James K.D."/>
            <person name="Quiles M."/>
            <person name="Madan Babu M."/>
            <person name="Saito T."/>
            <person name="Buchrieser C."/>
            <person name="Wardroper A."/>
            <person name="Felder M."/>
            <person name="Thangavelu M."/>
            <person name="Johnson D."/>
            <person name="Knights A."/>
            <person name="Loulseged H."/>
            <person name="Mungall K.L."/>
            <person name="Oliver K."/>
            <person name="Price C."/>
            <person name="Quail M.A."/>
            <person name="Urushihara H."/>
            <person name="Hernandez J."/>
            <person name="Rabbinowitsch E."/>
            <person name="Steffen D."/>
            <person name="Sanders M."/>
            <person name="Ma J."/>
            <person name="Kohara Y."/>
            <person name="Sharp S."/>
            <person name="Simmonds M.N."/>
            <person name="Spiegler S."/>
            <person name="Tivey A."/>
            <person name="Sugano S."/>
            <person name="White B."/>
            <person name="Walker D."/>
            <person name="Woodward J.R."/>
            <person name="Winckler T."/>
            <person name="Tanaka Y."/>
            <person name="Shaulsky G."/>
            <person name="Schleicher M."/>
            <person name="Weinstock G.M."/>
            <person name="Rosenthal A."/>
            <person name="Cox E.C."/>
            <person name="Chisholm R.L."/>
            <person name="Gibbs R.A."/>
            <person name="Loomis W.F."/>
            <person name="Platzer M."/>
            <person name="Kay R.R."/>
            <person name="Williams J.G."/>
            <person name="Dear P.H."/>
            <person name="Noegel A.A."/>
            <person name="Barrell B.G."/>
            <person name="Kuspa A."/>
        </authorList>
    </citation>
    <scope>NUCLEOTIDE SEQUENCE [LARGE SCALE GENOMIC DNA]</scope>
    <source>
        <strain>AX4</strain>
    </source>
</reference>
<evidence type="ECO:0000250" key="1"/>
<evidence type="ECO:0000255" key="2">
    <source>
        <dbReference type="PROSITE-ProRule" id="PRU00404"/>
    </source>
</evidence>
<evidence type="ECO:0000256" key="3">
    <source>
        <dbReference type="SAM" id="MobiDB-lite"/>
    </source>
</evidence>
<evidence type="ECO:0000305" key="4"/>
<accession>Q55EZ6</accession>
<dbReference type="EMBL" id="AAFI02000004">
    <property type="protein sequence ID" value="EAL72940.1"/>
    <property type="molecule type" value="Genomic_DNA"/>
</dbReference>
<dbReference type="RefSeq" id="XP_646874.1">
    <property type="nucleotide sequence ID" value="XM_641782.1"/>
</dbReference>
<dbReference type="SMR" id="Q55EZ6"/>
<dbReference type="FunCoup" id="Q55EZ6">
    <property type="interactions" value="1230"/>
</dbReference>
<dbReference type="STRING" id="44689.Q55EZ6"/>
<dbReference type="PaxDb" id="44689-DDB0305305"/>
<dbReference type="EnsemblProtists" id="EAL72940">
    <property type="protein sequence ID" value="EAL72940"/>
    <property type="gene ID" value="DDB_G0268702"/>
</dbReference>
<dbReference type="GeneID" id="8616557"/>
<dbReference type="KEGG" id="ddi:DDB_G0268702"/>
<dbReference type="dictyBase" id="DDB_G0268702">
    <property type="gene designation" value="copD"/>
</dbReference>
<dbReference type="VEuPathDB" id="AmoebaDB:DDB_G0268702"/>
<dbReference type="eggNOG" id="KOG2635">
    <property type="taxonomic scope" value="Eukaryota"/>
</dbReference>
<dbReference type="HOGENOM" id="CLU_019988_3_0_1"/>
<dbReference type="InParanoid" id="Q55EZ6"/>
<dbReference type="OMA" id="VQFRTHP"/>
<dbReference type="PhylomeDB" id="Q55EZ6"/>
<dbReference type="Reactome" id="R-DDI-6807878">
    <property type="pathway name" value="COPI-mediated anterograde transport"/>
</dbReference>
<dbReference type="Reactome" id="R-DDI-6811434">
    <property type="pathway name" value="COPI-dependent Golgi-to-ER retrograde traffic"/>
</dbReference>
<dbReference type="PRO" id="PR:Q55EZ6"/>
<dbReference type="Proteomes" id="UP000002195">
    <property type="component" value="Chromosome 1"/>
</dbReference>
<dbReference type="GO" id="GO:0030126">
    <property type="term" value="C:COPI vesicle coat"/>
    <property type="evidence" value="ECO:0000318"/>
    <property type="project" value="GO_Central"/>
</dbReference>
<dbReference type="GO" id="GO:0000139">
    <property type="term" value="C:Golgi membrane"/>
    <property type="evidence" value="ECO:0007669"/>
    <property type="project" value="UniProtKB-SubCell"/>
</dbReference>
<dbReference type="GO" id="GO:0045335">
    <property type="term" value="C:phagocytic vesicle"/>
    <property type="evidence" value="ECO:0007005"/>
    <property type="project" value="dictyBase"/>
</dbReference>
<dbReference type="GO" id="GO:0006888">
    <property type="term" value="P:endoplasmic reticulum to Golgi vesicle-mediated transport"/>
    <property type="evidence" value="ECO:0000318"/>
    <property type="project" value="GO_Central"/>
</dbReference>
<dbReference type="GO" id="GO:0051645">
    <property type="term" value="P:Golgi localization"/>
    <property type="evidence" value="ECO:0000318"/>
    <property type="project" value="GO_Central"/>
</dbReference>
<dbReference type="GO" id="GO:0015031">
    <property type="term" value="P:protein transport"/>
    <property type="evidence" value="ECO:0007669"/>
    <property type="project" value="UniProtKB-KW"/>
</dbReference>
<dbReference type="GO" id="GO:0006890">
    <property type="term" value="P:retrograde vesicle-mediated transport, Golgi to endoplasmic reticulum"/>
    <property type="evidence" value="ECO:0000318"/>
    <property type="project" value="GO_Central"/>
</dbReference>
<dbReference type="CDD" id="cd09254">
    <property type="entry name" value="AP_delta-COPI_MHD"/>
    <property type="match status" value="1"/>
</dbReference>
<dbReference type="CDD" id="cd14830">
    <property type="entry name" value="Delta_COP_N"/>
    <property type="match status" value="1"/>
</dbReference>
<dbReference type="FunFam" id="3.30.450.60:FF:000003">
    <property type="entry name" value="Coatomer subunit delta"/>
    <property type="match status" value="1"/>
</dbReference>
<dbReference type="Gene3D" id="3.30.450.60">
    <property type="match status" value="1"/>
</dbReference>
<dbReference type="Gene3D" id="2.60.40.1170">
    <property type="entry name" value="Mu homology domain, subdomain B"/>
    <property type="match status" value="2"/>
</dbReference>
<dbReference type="InterPro" id="IPR036168">
    <property type="entry name" value="AP2_Mu_C_sf"/>
</dbReference>
<dbReference type="InterPro" id="IPR022775">
    <property type="entry name" value="AP_mu_sigma_su"/>
</dbReference>
<dbReference type="InterPro" id="IPR027059">
    <property type="entry name" value="Coatomer_dsu"/>
</dbReference>
<dbReference type="InterPro" id="IPR011012">
    <property type="entry name" value="Longin-like_dom_sf"/>
</dbReference>
<dbReference type="InterPro" id="IPR028565">
    <property type="entry name" value="MHD"/>
</dbReference>
<dbReference type="PANTHER" id="PTHR10121">
    <property type="entry name" value="COATOMER SUBUNIT DELTA"/>
    <property type="match status" value="1"/>
</dbReference>
<dbReference type="PANTHER" id="PTHR10121:SF0">
    <property type="entry name" value="COATOMER SUBUNIT DELTA"/>
    <property type="match status" value="1"/>
</dbReference>
<dbReference type="Pfam" id="PF00928">
    <property type="entry name" value="Adap_comp_sub"/>
    <property type="match status" value="1"/>
</dbReference>
<dbReference type="Pfam" id="PF01217">
    <property type="entry name" value="Clat_adaptor_s"/>
    <property type="match status" value="1"/>
</dbReference>
<dbReference type="SUPFAM" id="SSF49447">
    <property type="entry name" value="Second domain of Mu2 adaptin subunit (ap50) of ap2 adaptor"/>
    <property type="match status" value="1"/>
</dbReference>
<dbReference type="SUPFAM" id="SSF64356">
    <property type="entry name" value="SNARE-like"/>
    <property type="match status" value="1"/>
</dbReference>
<dbReference type="PROSITE" id="PS51072">
    <property type="entry name" value="MHD"/>
    <property type="match status" value="1"/>
</dbReference>
<proteinExistence type="inferred from homology"/>